<organism>
    <name type="scientific">Rickettsia bellii (strain OSU 85-389)</name>
    <dbReference type="NCBI Taxonomy" id="391896"/>
    <lineage>
        <taxon>Bacteria</taxon>
        <taxon>Pseudomonadati</taxon>
        <taxon>Pseudomonadota</taxon>
        <taxon>Alphaproteobacteria</taxon>
        <taxon>Rickettsiales</taxon>
        <taxon>Rickettsiaceae</taxon>
        <taxon>Rickettsieae</taxon>
        <taxon>Rickettsia</taxon>
        <taxon>belli group</taxon>
    </lineage>
</organism>
<keyword id="KW-0687">Ribonucleoprotein</keyword>
<keyword id="KW-0689">Ribosomal protein</keyword>
<keyword id="KW-0694">RNA-binding</keyword>
<keyword id="KW-0699">rRNA-binding</keyword>
<dbReference type="EMBL" id="CP000849">
    <property type="protein sequence ID" value="ABV79764.1"/>
    <property type="molecule type" value="Genomic_DNA"/>
</dbReference>
<dbReference type="RefSeq" id="WP_012152238.1">
    <property type="nucleotide sequence ID" value="NC_009883.1"/>
</dbReference>
<dbReference type="SMR" id="A8GY14"/>
<dbReference type="KEGG" id="rbo:A1I_07330"/>
<dbReference type="HOGENOM" id="CLU_078938_3_0_5"/>
<dbReference type="GO" id="GO:1990904">
    <property type="term" value="C:ribonucleoprotein complex"/>
    <property type="evidence" value="ECO:0007669"/>
    <property type="project" value="UniProtKB-KW"/>
</dbReference>
<dbReference type="GO" id="GO:0005840">
    <property type="term" value="C:ribosome"/>
    <property type="evidence" value="ECO:0007669"/>
    <property type="project" value="UniProtKB-KW"/>
</dbReference>
<dbReference type="GO" id="GO:0019843">
    <property type="term" value="F:rRNA binding"/>
    <property type="evidence" value="ECO:0007669"/>
    <property type="project" value="UniProtKB-UniRule"/>
</dbReference>
<dbReference type="GO" id="GO:0003735">
    <property type="term" value="F:structural constituent of ribosome"/>
    <property type="evidence" value="ECO:0007669"/>
    <property type="project" value="InterPro"/>
</dbReference>
<dbReference type="GO" id="GO:0006412">
    <property type="term" value="P:translation"/>
    <property type="evidence" value="ECO:0007669"/>
    <property type="project" value="UniProtKB-UniRule"/>
</dbReference>
<dbReference type="Gene3D" id="3.10.430.100">
    <property type="entry name" value="Ribosomal protein L9, C-terminal domain"/>
    <property type="match status" value="1"/>
</dbReference>
<dbReference type="Gene3D" id="3.40.5.10">
    <property type="entry name" value="Ribosomal protein L9, N-terminal domain"/>
    <property type="match status" value="1"/>
</dbReference>
<dbReference type="HAMAP" id="MF_00503">
    <property type="entry name" value="Ribosomal_bL9"/>
    <property type="match status" value="1"/>
</dbReference>
<dbReference type="InterPro" id="IPR000244">
    <property type="entry name" value="Ribosomal_bL9"/>
</dbReference>
<dbReference type="InterPro" id="IPR009027">
    <property type="entry name" value="Ribosomal_bL9/RNase_H1_N"/>
</dbReference>
<dbReference type="InterPro" id="IPR020594">
    <property type="entry name" value="Ribosomal_bL9_bac/chp"/>
</dbReference>
<dbReference type="InterPro" id="IPR020069">
    <property type="entry name" value="Ribosomal_bL9_C"/>
</dbReference>
<dbReference type="InterPro" id="IPR036791">
    <property type="entry name" value="Ribosomal_bL9_C_sf"/>
</dbReference>
<dbReference type="InterPro" id="IPR020070">
    <property type="entry name" value="Ribosomal_bL9_N"/>
</dbReference>
<dbReference type="InterPro" id="IPR036935">
    <property type="entry name" value="Ribosomal_bL9_N_sf"/>
</dbReference>
<dbReference type="NCBIfam" id="TIGR00158">
    <property type="entry name" value="L9"/>
    <property type="match status" value="1"/>
</dbReference>
<dbReference type="PANTHER" id="PTHR21368">
    <property type="entry name" value="50S RIBOSOMAL PROTEIN L9"/>
    <property type="match status" value="1"/>
</dbReference>
<dbReference type="Pfam" id="PF03948">
    <property type="entry name" value="Ribosomal_L9_C"/>
    <property type="match status" value="1"/>
</dbReference>
<dbReference type="Pfam" id="PF01281">
    <property type="entry name" value="Ribosomal_L9_N"/>
    <property type="match status" value="1"/>
</dbReference>
<dbReference type="SUPFAM" id="SSF55658">
    <property type="entry name" value="L9 N-domain-like"/>
    <property type="match status" value="1"/>
</dbReference>
<dbReference type="SUPFAM" id="SSF55653">
    <property type="entry name" value="Ribosomal protein L9 C-domain"/>
    <property type="match status" value="1"/>
</dbReference>
<dbReference type="PROSITE" id="PS00651">
    <property type="entry name" value="RIBOSOMAL_L9"/>
    <property type="match status" value="1"/>
</dbReference>
<gene>
    <name evidence="1" type="primary">rplI</name>
    <name type="ordered locus">A1I_07330</name>
</gene>
<comment type="function">
    <text evidence="1">Binds to the 23S rRNA.</text>
</comment>
<comment type="similarity">
    <text evidence="1">Belongs to the bacterial ribosomal protein bL9 family.</text>
</comment>
<feature type="chain" id="PRO_1000014849" description="Large ribosomal subunit protein bL9">
    <location>
        <begin position="1"/>
        <end position="173"/>
    </location>
</feature>
<evidence type="ECO:0000255" key="1">
    <source>
        <dbReference type="HAMAP-Rule" id="MF_00503"/>
    </source>
</evidence>
<evidence type="ECO:0000305" key="2"/>
<reference key="1">
    <citation type="submission" date="2007-09" db="EMBL/GenBank/DDBJ databases">
        <title>Complete genome sequencing of Rickettsia bellii.</title>
        <authorList>
            <person name="Madan A."/>
            <person name="Lee H."/>
            <person name="Madan A."/>
            <person name="Yoon J.-G."/>
            <person name="Ryu G.-Y."/>
            <person name="Dasch G."/>
            <person name="Ereemeva M."/>
        </authorList>
    </citation>
    <scope>NUCLEOTIDE SEQUENCE [LARGE SCALE GENOMIC DNA]</scope>
    <source>
        <strain>OSU 85-389</strain>
    </source>
</reference>
<protein>
    <recommendedName>
        <fullName evidence="1">Large ribosomal subunit protein bL9</fullName>
    </recommendedName>
    <alternativeName>
        <fullName evidence="2">50S ribosomal protein L9</fullName>
    </alternativeName>
</protein>
<sequence>MEVILIKPVRKLGKIGEIHKVADGFGRNYLLPQKLAIRATELNKELIVKQKHELEEKDKQIKSEITKINDLIKDQKLIFVRQTSDDGKLFGSVNNKEIAKKLSQAVSYPISHLNIILDTQIKSTGIYKVEVRLHAELSTEVTVIVARSESEIQDYLREQKTEKSTTEPLAESA</sequence>
<proteinExistence type="inferred from homology"/>
<name>RL9_RICB8</name>
<accession>A8GY14</accession>